<proteinExistence type="inferred from homology"/>
<organism>
    <name type="scientific">Aspergillus oryzae (strain ATCC 42149 / RIB 40)</name>
    <name type="common">Yellow koji mold</name>
    <dbReference type="NCBI Taxonomy" id="510516"/>
    <lineage>
        <taxon>Eukaryota</taxon>
        <taxon>Fungi</taxon>
        <taxon>Dikarya</taxon>
        <taxon>Ascomycota</taxon>
        <taxon>Pezizomycotina</taxon>
        <taxon>Eurotiomycetes</taxon>
        <taxon>Eurotiomycetidae</taxon>
        <taxon>Eurotiales</taxon>
        <taxon>Aspergillaceae</taxon>
        <taxon>Aspergillus</taxon>
        <taxon>Aspergillus subgen. Circumdati</taxon>
    </lineage>
</organism>
<dbReference type="EC" id="2.3.2.27" evidence="3"/>
<dbReference type="EC" id="5.2.1.8" evidence="1"/>
<dbReference type="EMBL" id="BA000053">
    <property type="protein sequence ID" value="BAE63047.1"/>
    <property type="molecule type" value="Genomic_DNA"/>
</dbReference>
<dbReference type="SMR" id="Q2U5W8"/>
<dbReference type="STRING" id="510516.Q2U5W8"/>
<dbReference type="EnsemblFungi" id="BAE63047">
    <property type="protein sequence ID" value="BAE63047"/>
    <property type="gene ID" value="AO090120000480"/>
</dbReference>
<dbReference type="HOGENOM" id="CLU_012062_7_0_1"/>
<dbReference type="OMA" id="NFIKHCA"/>
<dbReference type="Proteomes" id="UP000006564">
    <property type="component" value="Chromosome 5"/>
</dbReference>
<dbReference type="GO" id="GO:0071013">
    <property type="term" value="C:catalytic step 2 spliceosome"/>
    <property type="evidence" value="ECO:0007669"/>
    <property type="project" value="TreeGrafter"/>
</dbReference>
<dbReference type="GO" id="GO:0003755">
    <property type="term" value="F:peptidyl-prolyl cis-trans isomerase activity"/>
    <property type="evidence" value="ECO:0007669"/>
    <property type="project" value="UniProtKB-KW"/>
</dbReference>
<dbReference type="GO" id="GO:0061630">
    <property type="term" value="F:ubiquitin protein ligase activity"/>
    <property type="evidence" value="ECO:0007669"/>
    <property type="project" value="TreeGrafter"/>
</dbReference>
<dbReference type="GO" id="GO:0006457">
    <property type="term" value="P:protein folding"/>
    <property type="evidence" value="ECO:0007669"/>
    <property type="project" value="InterPro"/>
</dbReference>
<dbReference type="GO" id="GO:0000209">
    <property type="term" value="P:protein polyubiquitination"/>
    <property type="evidence" value="ECO:0007669"/>
    <property type="project" value="TreeGrafter"/>
</dbReference>
<dbReference type="CDD" id="cd16663">
    <property type="entry name" value="RING-Ubox_PPIL2"/>
    <property type="match status" value="1"/>
</dbReference>
<dbReference type="FunFam" id="3.30.40.10:FF:000079">
    <property type="entry name" value="Peptidyl-prolyl cis-trans isomerase 2"/>
    <property type="match status" value="1"/>
</dbReference>
<dbReference type="FunFam" id="2.40.100.10:FF:000014">
    <property type="entry name" value="Peptidyl-prolyl cis-trans isomerase cyp65"/>
    <property type="match status" value="1"/>
</dbReference>
<dbReference type="Gene3D" id="2.40.100.10">
    <property type="entry name" value="Cyclophilin-like"/>
    <property type="match status" value="1"/>
</dbReference>
<dbReference type="Gene3D" id="3.30.40.10">
    <property type="entry name" value="Zinc/RING finger domain, C3HC4 (zinc finger)"/>
    <property type="match status" value="1"/>
</dbReference>
<dbReference type="InterPro" id="IPR029000">
    <property type="entry name" value="Cyclophilin-like_dom_sf"/>
</dbReference>
<dbReference type="InterPro" id="IPR020892">
    <property type="entry name" value="Cyclophilin-type_PPIase_CS"/>
</dbReference>
<dbReference type="InterPro" id="IPR002130">
    <property type="entry name" value="Cyclophilin-type_PPIase_dom"/>
</dbReference>
<dbReference type="InterPro" id="IPR044666">
    <property type="entry name" value="Cyclophilin_A-like"/>
</dbReference>
<dbReference type="InterPro" id="IPR026951">
    <property type="entry name" value="PPIL2_U-box_dom"/>
</dbReference>
<dbReference type="InterPro" id="IPR003613">
    <property type="entry name" value="Ubox_domain"/>
</dbReference>
<dbReference type="InterPro" id="IPR013083">
    <property type="entry name" value="Znf_RING/FYVE/PHD"/>
</dbReference>
<dbReference type="PANTHER" id="PTHR45625">
    <property type="entry name" value="PEPTIDYL-PROLYL CIS-TRANS ISOMERASE-RELATED"/>
    <property type="match status" value="1"/>
</dbReference>
<dbReference type="PANTHER" id="PTHR45625:SF1">
    <property type="entry name" value="RING-TYPE E3 UBIQUITIN-PROTEIN LIGASE PPIL2"/>
    <property type="match status" value="1"/>
</dbReference>
<dbReference type="Pfam" id="PF00160">
    <property type="entry name" value="Pro_isomerase"/>
    <property type="match status" value="1"/>
</dbReference>
<dbReference type="PRINTS" id="PR00153">
    <property type="entry name" value="CSAPPISMRASE"/>
</dbReference>
<dbReference type="SMART" id="SM00504">
    <property type="entry name" value="Ubox"/>
    <property type="match status" value="1"/>
</dbReference>
<dbReference type="SUPFAM" id="SSF50891">
    <property type="entry name" value="Cyclophilin-like"/>
    <property type="match status" value="1"/>
</dbReference>
<dbReference type="SUPFAM" id="SSF57850">
    <property type="entry name" value="RING/U-box"/>
    <property type="match status" value="1"/>
</dbReference>
<dbReference type="PROSITE" id="PS00170">
    <property type="entry name" value="CSA_PPIASE_1"/>
    <property type="match status" value="1"/>
</dbReference>
<dbReference type="PROSITE" id="PS50072">
    <property type="entry name" value="CSA_PPIASE_2"/>
    <property type="match status" value="1"/>
</dbReference>
<dbReference type="PROSITE" id="PS51698">
    <property type="entry name" value="U_BOX"/>
    <property type="match status" value="1"/>
</dbReference>
<reference key="1">
    <citation type="journal article" date="2005" name="Nature">
        <title>Genome sequencing and analysis of Aspergillus oryzae.</title>
        <authorList>
            <person name="Machida M."/>
            <person name="Asai K."/>
            <person name="Sano M."/>
            <person name="Tanaka T."/>
            <person name="Kumagai T."/>
            <person name="Terai G."/>
            <person name="Kusumoto K."/>
            <person name="Arima T."/>
            <person name="Akita O."/>
            <person name="Kashiwagi Y."/>
            <person name="Abe K."/>
            <person name="Gomi K."/>
            <person name="Horiuchi H."/>
            <person name="Kitamoto K."/>
            <person name="Kobayashi T."/>
            <person name="Takeuchi M."/>
            <person name="Denning D.W."/>
            <person name="Galagan J.E."/>
            <person name="Nierman W.C."/>
            <person name="Yu J."/>
            <person name="Archer D.B."/>
            <person name="Bennett J.W."/>
            <person name="Bhatnagar D."/>
            <person name="Cleveland T.E."/>
            <person name="Fedorova N.D."/>
            <person name="Gotoh O."/>
            <person name="Horikawa H."/>
            <person name="Hosoyama A."/>
            <person name="Ichinomiya M."/>
            <person name="Igarashi R."/>
            <person name="Iwashita K."/>
            <person name="Juvvadi P.R."/>
            <person name="Kato M."/>
            <person name="Kato Y."/>
            <person name="Kin T."/>
            <person name="Kokubun A."/>
            <person name="Maeda H."/>
            <person name="Maeyama N."/>
            <person name="Maruyama J."/>
            <person name="Nagasaki H."/>
            <person name="Nakajima T."/>
            <person name="Oda K."/>
            <person name="Okada K."/>
            <person name="Paulsen I."/>
            <person name="Sakamoto K."/>
            <person name="Sawano T."/>
            <person name="Takahashi M."/>
            <person name="Takase K."/>
            <person name="Terabayashi Y."/>
            <person name="Wortman J.R."/>
            <person name="Yamada O."/>
            <person name="Yamagata Y."/>
            <person name="Anazawa H."/>
            <person name="Hata Y."/>
            <person name="Koide Y."/>
            <person name="Komori T."/>
            <person name="Koyama Y."/>
            <person name="Minetoki T."/>
            <person name="Suharnan S."/>
            <person name="Tanaka A."/>
            <person name="Isono K."/>
            <person name="Kuhara S."/>
            <person name="Ogasawara N."/>
            <person name="Kikuchi H."/>
        </authorList>
    </citation>
    <scope>NUCLEOTIDE SEQUENCE [LARGE SCALE GENOMIC DNA]</scope>
    <source>
        <strain>ATCC 42149 / RIB 40</strain>
    </source>
</reference>
<sequence length="570" mass="62365">MGKGSKQITHSEWASGDSYSASAGAGGGKGGDNAPFKRLPFNFCSLSLQPFAHPVCTPSGTIFDLTNILPWIKKHGKNPVDGTPLKNSDLIKLNIAKNESGDYVDPVTYKVLTDNTHIVALRNTGNVFAWDTVERLNIKGKLWRDLVTDEEFGRKDIITLQDPQNIESRNLSSFNYLKEGESVPGQKEEESNVNASALGSSAKILKAKEAVAKARSERAQRADSSAVTKKADGSTTTSTQSKTASFQSGKPTPYNAAKYTTGMAAASFTSTGLTPHTSAELALLSDEEYMLKRGRVKQKGYARISTTSGDINLELQTEYAPKAVWNFIKLAKKGYYKDVTFHRNIKGFMIQGGDPSGTGRGGESIWGKYFNDEFEGPLKHDSRGTLSMANKGKNTNSSQFFIAYRALPHLNNKHTIFGHVIDDPTPSSTTLNNLETHPVNSSTNRPTPDIRITDVTIFVDPFEEFLNQKKAEEASGKNKKVDPTEEDRETQQEDDDQVTWTGKRVRGPGSTAAGGDAGSGVGKYLKAALANQTTQEEDEIVEFVDEEPEPEPMRKKFKSRGGFGDFSSWD</sequence>
<gene>
    <name type="primary">cyp8</name>
    <name type="ORF">AO090120000480</name>
</gene>
<feature type="chain" id="PRO_0000232983" description="Peptidyl-prolyl cis-trans isomerase-like 2">
    <location>
        <begin position="1"/>
        <end position="570"/>
    </location>
</feature>
<feature type="domain" description="U-box">
    <location>
        <begin position="37"/>
        <end position="110"/>
    </location>
</feature>
<feature type="domain" description="PPIase cyclophilin-type" evidence="4">
    <location>
        <begin position="298"/>
        <end position="457"/>
    </location>
</feature>
<feature type="region of interest" description="Disordered" evidence="5">
    <location>
        <begin position="215"/>
        <end position="253"/>
    </location>
</feature>
<feature type="region of interest" description="Disordered" evidence="5">
    <location>
        <begin position="428"/>
        <end position="449"/>
    </location>
</feature>
<feature type="region of interest" description="Disordered" evidence="5">
    <location>
        <begin position="469"/>
        <end position="570"/>
    </location>
</feature>
<feature type="compositionally biased region" description="Low complexity" evidence="5">
    <location>
        <begin position="234"/>
        <end position="248"/>
    </location>
</feature>
<feature type="compositionally biased region" description="Polar residues" evidence="5">
    <location>
        <begin position="428"/>
        <end position="446"/>
    </location>
</feature>
<feature type="compositionally biased region" description="Basic and acidic residues" evidence="5">
    <location>
        <begin position="469"/>
        <end position="483"/>
    </location>
</feature>
<feature type="compositionally biased region" description="Acidic residues" evidence="5">
    <location>
        <begin position="484"/>
        <end position="497"/>
    </location>
</feature>
<feature type="compositionally biased region" description="Acidic residues" evidence="5">
    <location>
        <begin position="535"/>
        <end position="550"/>
    </location>
</feature>
<evidence type="ECO:0000250" key="1">
    <source>
        <dbReference type="UniProtKB" id="Q08752"/>
    </source>
</evidence>
<evidence type="ECO:0000250" key="2">
    <source>
        <dbReference type="UniProtKB" id="Q09928"/>
    </source>
</evidence>
<evidence type="ECO:0000250" key="3">
    <source>
        <dbReference type="UniProtKB" id="Q13356"/>
    </source>
</evidence>
<evidence type="ECO:0000255" key="4">
    <source>
        <dbReference type="PROSITE-ProRule" id="PRU00156"/>
    </source>
</evidence>
<evidence type="ECO:0000256" key="5">
    <source>
        <dbReference type="SAM" id="MobiDB-lite"/>
    </source>
</evidence>
<evidence type="ECO:0000305" key="6"/>
<comment type="function">
    <text evidence="1 3">May catalyze the cis-trans isomerization of proline imidic peptide bonds in oligopeptides thereby assisting the folding of proteins. May also function as a chaperone, playing a role in intracellular transport of proteins. May also have a protein ubiquitin ligase activity acting as an E3 ubiquitin protein ligase or as a ubiquitin-ubiquitin ligase promoting elongation of ubiquitin chains on proteins.</text>
</comment>
<comment type="catalytic activity">
    <reaction>
        <text>[protein]-peptidylproline (omega=180) = [protein]-peptidylproline (omega=0)</text>
        <dbReference type="Rhea" id="RHEA:16237"/>
        <dbReference type="Rhea" id="RHEA-COMP:10747"/>
        <dbReference type="Rhea" id="RHEA-COMP:10748"/>
        <dbReference type="ChEBI" id="CHEBI:83833"/>
        <dbReference type="ChEBI" id="CHEBI:83834"/>
        <dbReference type="EC" id="5.2.1.8"/>
    </reaction>
</comment>
<comment type="catalytic activity">
    <reaction evidence="3">
        <text>S-ubiquitinyl-[E2 ubiquitin-conjugating enzyme]-L-cysteine + [acceptor protein]-L-lysine = [E2 ubiquitin-conjugating enzyme]-L-cysteine + N(6)-ubiquitinyl-[acceptor protein]-L-lysine.</text>
        <dbReference type="EC" id="2.3.2.27"/>
    </reaction>
</comment>
<comment type="subcellular location">
    <subcellularLocation>
        <location evidence="2 3">Nucleus</location>
    </subcellularLocation>
</comment>
<comment type="similarity">
    <text evidence="6">Belongs to the cyclophilin-type PPIase family. PPIL2 subfamily.</text>
</comment>
<accession>Q2U5W8</accession>
<protein>
    <recommendedName>
        <fullName evidence="6">Peptidyl-prolyl cis-trans isomerase-like 2</fullName>
        <shortName>PPIase</shortName>
        <ecNumber evidence="3">2.3.2.27</ecNumber>
        <ecNumber evidence="1">5.2.1.8</ecNumber>
    </recommendedName>
    <alternativeName>
        <fullName>Cyclophilin-60</fullName>
    </alternativeName>
    <alternativeName>
        <fullName>Cyclophilin-like protein Cyp-60</fullName>
    </alternativeName>
    <alternativeName>
        <fullName evidence="6">RING-type E3 ubiquitin transferase isomerase-like 2</fullName>
    </alternativeName>
    <alternativeName>
        <fullName>Rotamase</fullName>
    </alternativeName>
</protein>
<keyword id="KW-0413">Isomerase</keyword>
<keyword id="KW-0539">Nucleus</keyword>
<keyword id="KW-1185">Reference proteome</keyword>
<keyword id="KW-0697">Rotamase</keyword>
<keyword id="KW-0808">Transferase</keyword>
<keyword id="KW-0833">Ubl conjugation pathway</keyword>
<name>PPIL2_ASPOR</name>